<accession>P63415</accession>
<accession>Q491K5</accession>
<accession>Q9A1T1</accession>
<comment type="function">
    <text evidence="1">Catalyzes the formation of acetyl phosphate from acetate and ATP. Can also catalyze the reverse reaction.</text>
</comment>
<comment type="catalytic activity">
    <reaction evidence="1">
        <text>acetate + ATP = acetyl phosphate + ADP</text>
        <dbReference type="Rhea" id="RHEA:11352"/>
        <dbReference type="ChEBI" id="CHEBI:22191"/>
        <dbReference type="ChEBI" id="CHEBI:30089"/>
        <dbReference type="ChEBI" id="CHEBI:30616"/>
        <dbReference type="ChEBI" id="CHEBI:456216"/>
        <dbReference type="EC" id="2.7.2.1"/>
    </reaction>
</comment>
<comment type="cofactor">
    <cofactor evidence="1">
        <name>Mg(2+)</name>
        <dbReference type="ChEBI" id="CHEBI:18420"/>
    </cofactor>
    <cofactor evidence="1">
        <name>Mn(2+)</name>
        <dbReference type="ChEBI" id="CHEBI:29035"/>
    </cofactor>
    <text evidence="1">Mg(2+). Can also accept Mn(2+).</text>
</comment>
<comment type="pathway">
    <text evidence="1">Metabolic intermediate biosynthesis; acetyl-CoA biosynthesis; acetyl-CoA from acetate: step 1/2.</text>
</comment>
<comment type="subunit">
    <text evidence="1">Homodimer.</text>
</comment>
<comment type="subcellular location">
    <subcellularLocation>
        <location evidence="1">Cytoplasm</location>
    </subcellularLocation>
</comment>
<comment type="similarity">
    <text evidence="1">Belongs to the acetokinase family.</text>
</comment>
<keyword id="KW-0067">ATP-binding</keyword>
<keyword id="KW-0963">Cytoplasm</keyword>
<keyword id="KW-0418">Kinase</keyword>
<keyword id="KW-0460">Magnesium</keyword>
<keyword id="KW-0479">Metal-binding</keyword>
<keyword id="KW-0547">Nucleotide-binding</keyword>
<keyword id="KW-1185">Reference proteome</keyword>
<keyword id="KW-0808">Transferase</keyword>
<feature type="chain" id="PRO_0000107625" description="Acetate kinase">
    <location>
        <begin position="1"/>
        <end position="398"/>
    </location>
</feature>
<feature type="active site" description="Proton donor/acceptor" evidence="1">
    <location>
        <position position="146"/>
    </location>
</feature>
<feature type="binding site" evidence="1">
    <location>
        <position position="8"/>
    </location>
    <ligand>
        <name>Mg(2+)</name>
        <dbReference type="ChEBI" id="CHEBI:18420"/>
    </ligand>
</feature>
<feature type="binding site" evidence="1">
    <location>
        <position position="15"/>
    </location>
    <ligand>
        <name>ATP</name>
        <dbReference type="ChEBI" id="CHEBI:30616"/>
    </ligand>
</feature>
<feature type="binding site" evidence="1">
    <location>
        <position position="89"/>
    </location>
    <ligand>
        <name>substrate</name>
    </ligand>
</feature>
<feature type="binding site" evidence="1">
    <location>
        <begin position="206"/>
        <end position="210"/>
    </location>
    <ligand>
        <name>ATP</name>
        <dbReference type="ChEBI" id="CHEBI:30616"/>
    </ligand>
</feature>
<feature type="binding site" evidence="1">
    <location>
        <begin position="283"/>
        <end position="285"/>
    </location>
    <ligand>
        <name>ATP</name>
        <dbReference type="ChEBI" id="CHEBI:30616"/>
    </ligand>
</feature>
<feature type="binding site" evidence="1">
    <location>
        <begin position="331"/>
        <end position="335"/>
    </location>
    <ligand>
        <name>ATP</name>
        <dbReference type="ChEBI" id="CHEBI:30616"/>
    </ligand>
</feature>
<feature type="binding site" evidence="1">
    <location>
        <position position="383"/>
    </location>
    <ligand>
        <name>Mg(2+)</name>
        <dbReference type="ChEBI" id="CHEBI:18420"/>
    </ligand>
</feature>
<feature type="site" description="Transition state stabilizer" evidence="1">
    <location>
        <position position="178"/>
    </location>
</feature>
<feature type="site" description="Transition state stabilizer" evidence="1">
    <location>
        <position position="239"/>
    </location>
</feature>
<protein>
    <recommendedName>
        <fullName evidence="1">Acetate kinase</fullName>
        <ecNumber evidence="1">2.7.2.1</ecNumber>
    </recommendedName>
    <alternativeName>
        <fullName evidence="1">Acetokinase</fullName>
    </alternativeName>
</protein>
<gene>
    <name evidence="1" type="primary">ackA</name>
    <name type="ordered locus">SPy_0109</name>
    <name type="ordered locus">M5005_Spy0094</name>
</gene>
<reference key="1">
    <citation type="journal article" date="2001" name="Proc. Natl. Acad. Sci. U.S.A.">
        <title>Complete genome sequence of an M1 strain of Streptococcus pyogenes.</title>
        <authorList>
            <person name="Ferretti J.J."/>
            <person name="McShan W.M."/>
            <person name="Ajdic D.J."/>
            <person name="Savic D.J."/>
            <person name="Savic G."/>
            <person name="Lyon K."/>
            <person name="Primeaux C."/>
            <person name="Sezate S."/>
            <person name="Suvorov A.N."/>
            <person name="Kenton S."/>
            <person name="Lai H.S."/>
            <person name="Lin S.P."/>
            <person name="Qian Y."/>
            <person name="Jia H.G."/>
            <person name="Najar F.Z."/>
            <person name="Ren Q."/>
            <person name="Zhu H."/>
            <person name="Song L."/>
            <person name="White J."/>
            <person name="Yuan X."/>
            <person name="Clifton S.W."/>
            <person name="Roe B.A."/>
            <person name="McLaughlin R.E."/>
        </authorList>
    </citation>
    <scope>NUCLEOTIDE SEQUENCE [LARGE SCALE GENOMIC DNA]</scope>
    <source>
        <strain>ATCC 700294 / SF370 / Serotype M1</strain>
    </source>
</reference>
<reference key="2">
    <citation type="journal article" date="2005" name="J. Infect. Dis.">
        <title>Evolutionary origin and emergence of a highly successful clone of serotype M1 group A Streptococcus involved multiple horizontal gene transfer events.</title>
        <authorList>
            <person name="Sumby P."/>
            <person name="Porcella S.F."/>
            <person name="Madrigal A.G."/>
            <person name="Barbian K.D."/>
            <person name="Virtaneva K."/>
            <person name="Ricklefs S.M."/>
            <person name="Sturdevant D.E."/>
            <person name="Graham M.R."/>
            <person name="Vuopio-Varkila J."/>
            <person name="Hoe N.P."/>
            <person name="Musser J.M."/>
        </authorList>
    </citation>
    <scope>NUCLEOTIDE SEQUENCE [LARGE SCALE GENOMIC DNA]</scope>
    <source>
        <strain>ATCC BAA-947 / MGAS5005 / Serotype M1</strain>
    </source>
</reference>
<evidence type="ECO:0000255" key="1">
    <source>
        <dbReference type="HAMAP-Rule" id="MF_00020"/>
    </source>
</evidence>
<name>ACKA_STRP1</name>
<proteinExistence type="inferred from homology"/>
<sequence>MSKTIAINAGSSSLKWQLYQMPEEAVLAQGIIERIGLKDSISTVKYDGKKEEQILDIHDHTEAVKILLNDLIHFGIIAAYDEITGVGHRVVAGGELFKESVVVNDKVLEQIEELSVLAPLHNPGAAAGIRAFRDILPDITSVCVFDTSFHTSMAKHTYLYPIPQKYYTDYKVRKYGAHGTSHKYVAQEAAKMLGRPLEELKLITAHIGNGVSITANYHGKSVDTSMGFTPLAGPMMGTRSGDIDPAIIPYLIEQDPELKDAADVVNMLNKKSGLSGVSGISSDMRDIEAGLQEDNPDAVLAYNIFIDRIKKCIGQYFAVLNGADALVFTAGMGENAPLMRQDVIGGLTWFGMDIDPEKNVFGYRGDISTPESKVKVLVISTDEELCIARDVERLKNTK</sequence>
<organism>
    <name type="scientific">Streptococcus pyogenes serotype M1</name>
    <dbReference type="NCBI Taxonomy" id="301447"/>
    <lineage>
        <taxon>Bacteria</taxon>
        <taxon>Bacillati</taxon>
        <taxon>Bacillota</taxon>
        <taxon>Bacilli</taxon>
        <taxon>Lactobacillales</taxon>
        <taxon>Streptococcaceae</taxon>
        <taxon>Streptococcus</taxon>
    </lineage>
</organism>
<dbReference type="EC" id="2.7.2.1" evidence="1"/>
<dbReference type="EMBL" id="AE004092">
    <property type="protein sequence ID" value="AAK33227.1"/>
    <property type="molecule type" value="Genomic_DNA"/>
</dbReference>
<dbReference type="EMBL" id="CP000017">
    <property type="protein sequence ID" value="AAZ50713.1"/>
    <property type="molecule type" value="Genomic_DNA"/>
</dbReference>
<dbReference type="RefSeq" id="NP_268506.1">
    <property type="nucleotide sequence ID" value="NC_002737.2"/>
</dbReference>
<dbReference type="SMR" id="P63415"/>
<dbReference type="PaxDb" id="1314-HKU360_00141"/>
<dbReference type="KEGG" id="spy:SPy_0109"/>
<dbReference type="KEGG" id="spz:M5005_Spy0094"/>
<dbReference type="PATRIC" id="fig|160490.10.peg.94"/>
<dbReference type="HOGENOM" id="CLU_020352_0_1_9"/>
<dbReference type="OMA" id="HKYVSQR"/>
<dbReference type="UniPathway" id="UPA00340">
    <property type="reaction ID" value="UER00458"/>
</dbReference>
<dbReference type="Proteomes" id="UP000000750">
    <property type="component" value="Chromosome"/>
</dbReference>
<dbReference type="GO" id="GO:0005737">
    <property type="term" value="C:cytoplasm"/>
    <property type="evidence" value="ECO:0007669"/>
    <property type="project" value="UniProtKB-SubCell"/>
</dbReference>
<dbReference type="GO" id="GO:0008776">
    <property type="term" value="F:acetate kinase activity"/>
    <property type="evidence" value="ECO:0007669"/>
    <property type="project" value="UniProtKB-UniRule"/>
</dbReference>
<dbReference type="GO" id="GO:0005524">
    <property type="term" value="F:ATP binding"/>
    <property type="evidence" value="ECO:0007669"/>
    <property type="project" value="UniProtKB-KW"/>
</dbReference>
<dbReference type="GO" id="GO:0000287">
    <property type="term" value="F:magnesium ion binding"/>
    <property type="evidence" value="ECO:0007669"/>
    <property type="project" value="UniProtKB-UniRule"/>
</dbReference>
<dbReference type="GO" id="GO:0006083">
    <property type="term" value="P:acetate metabolic process"/>
    <property type="evidence" value="ECO:0007669"/>
    <property type="project" value="TreeGrafter"/>
</dbReference>
<dbReference type="GO" id="GO:0006085">
    <property type="term" value="P:acetyl-CoA biosynthetic process"/>
    <property type="evidence" value="ECO:0007669"/>
    <property type="project" value="UniProtKB-UniRule"/>
</dbReference>
<dbReference type="CDD" id="cd24010">
    <property type="entry name" value="ASKHA_NBD_AcK_PK"/>
    <property type="match status" value="1"/>
</dbReference>
<dbReference type="Gene3D" id="3.30.420.40">
    <property type="match status" value="2"/>
</dbReference>
<dbReference type="HAMAP" id="MF_00020">
    <property type="entry name" value="Acetate_kinase"/>
    <property type="match status" value="1"/>
</dbReference>
<dbReference type="InterPro" id="IPR004372">
    <property type="entry name" value="Ac/propionate_kinase"/>
</dbReference>
<dbReference type="InterPro" id="IPR000890">
    <property type="entry name" value="Aliphatic_acid_kin_short-chain"/>
</dbReference>
<dbReference type="InterPro" id="IPR023865">
    <property type="entry name" value="Aliphatic_acid_kinase_CS"/>
</dbReference>
<dbReference type="InterPro" id="IPR043129">
    <property type="entry name" value="ATPase_NBD"/>
</dbReference>
<dbReference type="NCBIfam" id="TIGR00016">
    <property type="entry name" value="ackA"/>
    <property type="match status" value="1"/>
</dbReference>
<dbReference type="PANTHER" id="PTHR21060">
    <property type="entry name" value="ACETATE KINASE"/>
    <property type="match status" value="1"/>
</dbReference>
<dbReference type="PANTHER" id="PTHR21060:SF15">
    <property type="entry name" value="ACETATE KINASE-RELATED"/>
    <property type="match status" value="1"/>
</dbReference>
<dbReference type="Pfam" id="PF00871">
    <property type="entry name" value="Acetate_kinase"/>
    <property type="match status" value="1"/>
</dbReference>
<dbReference type="PIRSF" id="PIRSF000722">
    <property type="entry name" value="Acetate_prop_kin"/>
    <property type="match status" value="1"/>
</dbReference>
<dbReference type="PRINTS" id="PR00471">
    <property type="entry name" value="ACETATEKNASE"/>
</dbReference>
<dbReference type="SUPFAM" id="SSF53067">
    <property type="entry name" value="Actin-like ATPase domain"/>
    <property type="match status" value="2"/>
</dbReference>
<dbReference type="PROSITE" id="PS01075">
    <property type="entry name" value="ACETATE_KINASE_1"/>
    <property type="match status" value="1"/>
</dbReference>
<dbReference type="PROSITE" id="PS01076">
    <property type="entry name" value="ACETATE_KINASE_2"/>
    <property type="match status" value="1"/>
</dbReference>